<evidence type="ECO:0000250" key="1"/>
<evidence type="ECO:0000250" key="2">
    <source>
        <dbReference type="UniProtKB" id="Q55DL0"/>
    </source>
</evidence>
<evidence type="ECO:0000250" key="3">
    <source>
        <dbReference type="UniProtKB" id="Q9P903"/>
    </source>
</evidence>
<evidence type="ECO:0000305" key="4"/>
<keyword id="KW-0378">Hydrolase</keyword>
<keyword id="KW-0479">Metal-binding</keyword>
<keyword id="KW-1185">Reference proteome</keyword>
<keyword id="KW-0862">Zinc</keyword>
<reference key="1">
    <citation type="journal article" date="2003" name="PLoS Biol.">
        <title>The genome sequence of Caenorhabditis briggsae: a platform for comparative genomics.</title>
        <authorList>
            <person name="Stein L.D."/>
            <person name="Bao Z."/>
            <person name="Blasiar D."/>
            <person name="Blumenthal T."/>
            <person name="Brent M.R."/>
            <person name="Chen N."/>
            <person name="Chinwalla A."/>
            <person name="Clarke L."/>
            <person name="Clee C."/>
            <person name="Coghlan A."/>
            <person name="Coulson A."/>
            <person name="D'Eustachio P."/>
            <person name="Fitch D.H.A."/>
            <person name="Fulton L.A."/>
            <person name="Fulton R.E."/>
            <person name="Griffiths-Jones S."/>
            <person name="Harris T.W."/>
            <person name="Hillier L.W."/>
            <person name="Kamath R."/>
            <person name="Kuwabara P.E."/>
            <person name="Mardis E.R."/>
            <person name="Marra M.A."/>
            <person name="Miner T.L."/>
            <person name="Minx P."/>
            <person name="Mullikin J.C."/>
            <person name="Plumb R.W."/>
            <person name="Rogers J."/>
            <person name="Schein J.E."/>
            <person name="Sohrmann M."/>
            <person name="Spieth J."/>
            <person name="Stajich J.E."/>
            <person name="Wei C."/>
            <person name="Willey D."/>
            <person name="Wilson R.K."/>
            <person name="Durbin R.M."/>
            <person name="Waterston R.H."/>
        </authorList>
    </citation>
    <scope>NUCLEOTIDE SEQUENCE [LARGE SCALE GENOMIC DNA]</scope>
    <source>
        <strain>AF16</strain>
    </source>
</reference>
<accession>Q61YQ1</accession>
<accession>A8WV29</accession>
<comment type="catalytic activity">
    <reaction evidence="2">
        <text>5,6-dihydrouracil + H2O = 3-(carbamoylamino)propanoate + H(+)</text>
        <dbReference type="Rhea" id="RHEA:16121"/>
        <dbReference type="ChEBI" id="CHEBI:11892"/>
        <dbReference type="ChEBI" id="CHEBI:15377"/>
        <dbReference type="ChEBI" id="CHEBI:15378"/>
        <dbReference type="ChEBI" id="CHEBI:15901"/>
        <dbReference type="EC" id="3.5.2.2"/>
    </reaction>
</comment>
<comment type="cofactor">
    <cofactor evidence="2">
        <name>Zn(2+)</name>
        <dbReference type="ChEBI" id="CHEBI:29105"/>
    </cofactor>
    <text evidence="2">Binds 2 Zn(2+) ions per subunit.</text>
</comment>
<comment type="subunit">
    <text evidence="2">Homotetramer.</text>
</comment>
<comment type="PTM">
    <text evidence="1">Carboxylation allows a single lysine to coordinate two zinc ions.</text>
</comment>
<comment type="similarity">
    <text evidence="4">Belongs to the metallo-dependent hydrolases superfamily. Hydantoinase/dihydropyrimidinase family.</text>
</comment>
<protein>
    <recommendedName>
        <fullName>Dihydropyrimidinase 2</fullName>
        <ecNumber evidence="2">3.5.2.2</ecNumber>
    </recommendedName>
</protein>
<organism>
    <name type="scientific">Caenorhabditis briggsae</name>
    <dbReference type="NCBI Taxonomy" id="6238"/>
    <lineage>
        <taxon>Eukaryota</taxon>
        <taxon>Metazoa</taxon>
        <taxon>Ecdysozoa</taxon>
        <taxon>Nematoda</taxon>
        <taxon>Chromadorea</taxon>
        <taxon>Rhabditida</taxon>
        <taxon>Rhabditina</taxon>
        <taxon>Rhabditomorpha</taxon>
        <taxon>Rhabditoidea</taxon>
        <taxon>Rhabditidae</taxon>
        <taxon>Peloderinae</taxon>
        <taxon>Caenorhabditis</taxon>
    </lineage>
</organism>
<sequence>MSLLIKNGTIVNDDAMFKSDVLVHDGKIVEIAPSIDPTPGLEVVDATDRFVIPGGIDPHTHMQLPFMGEVAKDDFHRGTEAAVAGGTTMIIDFVIPTKGESLLVAYDRWRGWADPKVVCDYGLSMAITSWGQEIAKEMEMVTKADYGINSFKFFLAYAGVFMVRDEEFYQGMLQCAKLRALARVHAENGAVIAERCEHLLSSGITGPEGHTQSRPEELEAEATFRACTMASQANCPLYVVHVMSKGAAAAIAHHRKKGAVVFGEPIAAGLATDGSHYYNEDWLHAARYIMSPPLSRDPSTPNALMKLLAAGELHLTATDNCTFDCHQKSLGKDDFTKIPNGVNGVEDRMSVVWDKGVHAGIIDPMKFVAVTSTMAAKIFNCYPRKGRIAVGSDADIVVWNANATRTISKDTHHHAIDFNIFEGMQVHGVPETTICRGRIVWADGQLRTVQGAGRFVPLPPDSQIVFSAVDNRGKALEPVKVERAPYVATTLEAPDANANIVVKTRSAVPPGGISSIQF</sequence>
<dbReference type="EC" id="3.5.2.2" evidence="2"/>
<dbReference type="EMBL" id="HE601244">
    <property type="protein sequence ID" value="CAP24340.1"/>
    <property type="molecule type" value="Genomic_DNA"/>
</dbReference>
<dbReference type="SMR" id="Q61YQ1"/>
<dbReference type="FunCoup" id="Q61YQ1">
    <property type="interactions" value="1065"/>
</dbReference>
<dbReference type="STRING" id="6238.Q61YQ1"/>
<dbReference type="EnsemblMetazoa" id="CBG03443.1">
    <property type="protein sequence ID" value="CBG03443.1"/>
    <property type="gene ID" value="WBGene00026309"/>
</dbReference>
<dbReference type="KEGG" id="cbr:CBG_03443"/>
<dbReference type="CTD" id="8575752"/>
<dbReference type="WormBase" id="CBG03443">
    <property type="protein sequence ID" value="CBP00929"/>
    <property type="gene ID" value="WBGene00026309"/>
    <property type="gene designation" value="Cbr-dhp-2"/>
</dbReference>
<dbReference type="eggNOG" id="KOG2584">
    <property type="taxonomic scope" value="Eukaryota"/>
</dbReference>
<dbReference type="HOGENOM" id="CLU_015572_2_2_1"/>
<dbReference type="InParanoid" id="Q61YQ1"/>
<dbReference type="OMA" id="SAETHHM"/>
<dbReference type="Proteomes" id="UP000008549">
    <property type="component" value="Unassembled WGS sequence"/>
</dbReference>
<dbReference type="GO" id="GO:0005829">
    <property type="term" value="C:cytosol"/>
    <property type="evidence" value="ECO:0000318"/>
    <property type="project" value="GO_Central"/>
</dbReference>
<dbReference type="GO" id="GO:0004157">
    <property type="term" value="F:dihydropyrimidinase activity"/>
    <property type="evidence" value="ECO:0000318"/>
    <property type="project" value="GO_Central"/>
</dbReference>
<dbReference type="GO" id="GO:0046872">
    <property type="term" value="F:metal ion binding"/>
    <property type="evidence" value="ECO:0007669"/>
    <property type="project" value="UniProtKB-KW"/>
</dbReference>
<dbReference type="GO" id="GO:0006208">
    <property type="term" value="P:pyrimidine nucleobase catabolic process"/>
    <property type="evidence" value="ECO:0000318"/>
    <property type="project" value="GO_Central"/>
</dbReference>
<dbReference type="CDD" id="cd01314">
    <property type="entry name" value="D-HYD"/>
    <property type="match status" value="1"/>
</dbReference>
<dbReference type="FunFam" id="3.20.20.140:FF:000001">
    <property type="entry name" value="Dihydropyrimidinase like 3"/>
    <property type="match status" value="1"/>
</dbReference>
<dbReference type="Gene3D" id="3.20.20.140">
    <property type="entry name" value="Metal-dependent hydrolases"/>
    <property type="match status" value="1"/>
</dbReference>
<dbReference type="Gene3D" id="2.30.40.10">
    <property type="entry name" value="Urease, subunit C, domain 1"/>
    <property type="match status" value="1"/>
</dbReference>
<dbReference type="InterPro" id="IPR006680">
    <property type="entry name" value="Amidohydro-rel"/>
</dbReference>
<dbReference type="InterPro" id="IPR011778">
    <property type="entry name" value="Hydantoinase/dihydroPyrase"/>
</dbReference>
<dbReference type="InterPro" id="IPR011059">
    <property type="entry name" value="Metal-dep_hydrolase_composite"/>
</dbReference>
<dbReference type="InterPro" id="IPR032466">
    <property type="entry name" value="Metal_Hydrolase"/>
</dbReference>
<dbReference type="InterPro" id="IPR050378">
    <property type="entry name" value="Metallo-dep_Hydrolases_sf"/>
</dbReference>
<dbReference type="NCBIfam" id="TIGR02033">
    <property type="entry name" value="D-hydantoinase"/>
    <property type="match status" value="1"/>
</dbReference>
<dbReference type="PANTHER" id="PTHR11647:SF1">
    <property type="entry name" value="COLLAPSIN RESPONSE MEDIATOR PROTEIN"/>
    <property type="match status" value="1"/>
</dbReference>
<dbReference type="PANTHER" id="PTHR11647">
    <property type="entry name" value="HYDRANTOINASE/DIHYDROPYRIMIDINASE FAMILY MEMBER"/>
    <property type="match status" value="1"/>
</dbReference>
<dbReference type="Pfam" id="PF01979">
    <property type="entry name" value="Amidohydro_1"/>
    <property type="match status" value="1"/>
</dbReference>
<dbReference type="SUPFAM" id="SSF51338">
    <property type="entry name" value="Composite domain of metallo-dependent hydrolases"/>
    <property type="match status" value="2"/>
</dbReference>
<dbReference type="SUPFAM" id="SSF51556">
    <property type="entry name" value="Metallo-dependent hydrolases"/>
    <property type="match status" value="1"/>
</dbReference>
<gene>
    <name type="primary">dhp-2</name>
    <name type="ORF">CBG03443</name>
</gene>
<proteinExistence type="inferred from homology"/>
<name>DHP2_CAEBR</name>
<feature type="chain" id="PRO_0000165930" description="Dihydropyrimidinase 2">
    <location>
        <begin position="1"/>
        <end position="518"/>
    </location>
</feature>
<feature type="binding site" evidence="3">
    <location>
        <position position="59"/>
    </location>
    <ligand>
        <name>Zn(2+)</name>
        <dbReference type="ChEBI" id="CHEBI:29105"/>
        <label>1</label>
    </ligand>
</feature>
<feature type="binding site" evidence="3">
    <location>
        <position position="61"/>
    </location>
    <ligand>
        <name>Zn(2+)</name>
        <dbReference type="ChEBI" id="CHEBI:29105"/>
        <label>1</label>
    </ligand>
</feature>
<feature type="binding site" description="via carbamate group" evidence="3">
    <location>
        <position position="152"/>
    </location>
    <ligand>
        <name>Zn(2+)</name>
        <dbReference type="ChEBI" id="CHEBI:29105"/>
        <label>1</label>
    </ligand>
</feature>
<feature type="binding site" description="via carbamate group" evidence="3">
    <location>
        <position position="152"/>
    </location>
    <ligand>
        <name>Zn(2+)</name>
        <dbReference type="ChEBI" id="CHEBI:29105"/>
        <label>2</label>
    </ligand>
</feature>
<feature type="binding site" evidence="3">
    <location>
        <position position="157"/>
    </location>
    <ligand>
        <name>substrate</name>
    </ligand>
</feature>
<feature type="binding site" evidence="3">
    <location>
        <position position="185"/>
    </location>
    <ligand>
        <name>Zn(2+)</name>
        <dbReference type="ChEBI" id="CHEBI:29105"/>
        <label>2</label>
    </ligand>
</feature>
<feature type="binding site" evidence="3">
    <location>
        <position position="241"/>
    </location>
    <ligand>
        <name>Zn(2+)</name>
        <dbReference type="ChEBI" id="CHEBI:29105"/>
        <label>2</label>
    </ligand>
</feature>
<feature type="binding site" evidence="3">
    <location>
        <position position="291"/>
    </location>
    <ligand>
        <name>substrate</name>
    </ligand>
</feature>
<feature type="binding site" evidence="3">
    <location>
        <position position="319"/>
    </location>
    <ligand>
        <name>Zn(2+)</name>
        <dbReference type="ChEBI" id="CHEBI:29105"/>
        <label>1</label>
    </ligand>
</feature>
<feature type="binding site" evidence="3">
    <location>
        <position position="340"/>
    </location>
    <ligand>
        <name>substrate</name>
    </ligand>
</feature>
<feature type="modified residue" description="N6-carboxylysine" evidence="3">
    <location>
        <position position="152"/>
    </location>
</feature>